<name>YWZ7_CAEEL</name>
<accession>Q11097</accession>
<protein>
    <recommendedName>
        <fullName>Uncharacterized protein C02B8.7</fullName>
    </recommendedName>
</protein>
<gene>
    <name type="ORF">C02B8.7</name>
</gene>
<organism>
    <name type="scientific">Caenorhabditis elegans</name>
    <dbReference type="NCBI Taxonomy" id="6239"/>
    <lineage>
        <taxon>Eukaryota</taxon>
        <taxon>Metazoa</taxon>
        <taxon>Ecdysozoa</taxon>
        <taxon>Nematoda</taxon>
        <taxon>Chromadorea</taxon>
        <taxon>Rhabditida</taxon>
        <taxon>Rhabditina</taxon>
        <taxon>Rhabditomorpha</taxon>
        <taxon>Rhabditoidea</taxon>
        <taxon>Rhabditidae</taxon>
        <taxon>Peloderinae</taxon>
        <taxon>Caenorhabditis</taxon>
    </lineage>
</organism>
<reference key="1">
    <citation type="journal article" date="1998" name="Science">
        <title>Genome sequence of the nematode C. elegans: a platform for investigating biology.</title>
        <authorList>
            <consortium name="The C. elegans sequencing consortium"/>
        </authorList>
    </citation>
    <scope>NUCLEOTIDE SEQUENCE [LARGE SCALE GENOMIC DNA]</scope>
    <source>
        <strain>Bristol N2</strain>
    </source>
</reference>
<keyword id="KW-1185">Reference proteome</keyword>
<feature type="chain" id="PRO_0000065103" description="Uncharacterized protein C02B8.7">
    <location>
        <begin position="1"/>
        <end position="52"/>
    </location>
</feature>
<proteinExistence type="predicted"/>
<dbReference type="EMBL" id="FO080272">
    <property type="protein sequence ID" value="CCD62508.1"/>
    <property type="molecule type" value="Genomic_DNA"/>
</dbReference>
<dbReference type="PIR" id="T15376">
    <property type="entry name" value="T15376"/>
</dbReference>
<dbReference type="RefSeq" id="NP_509370.1">
    <property type="nucleotide sequence ID" value="NM_076969.1"/>
</dbReference>
<dbReference type="STRING" id="6239.C02B8.7.1"/>
<dbReference type="PaxDb" id="6239-C02B8.7"/>
<dbReference type="EnsemblMetazoa" id="C02B8.7.1">
    <property type="protein sequence ID" value="C02B8.7.1"/>
    <property type="gene ID" value="WBGene00015325"/>
</dbReference>
<dbReference type="GeneID" id="182106"/>
<dbReference type="KEGG" id="cel:CELE_C02B8.7"/>
<dbReference type="UCSC" id="C02B8.7">
    <property type="organism name" value="c. elegans"/>
</dbReference>
<dbReference type="AGR" id="WB:WBGene00015325"/>
<dbReference type="CTD" id="182106"/>
<dbReference type="WormBase" id="C02B8.7">
    <property type="protein sequence ID" value="CE03896"/>
    <property type="gene ID" value="WBGene00015325"/>
</dbReference>
<dbReference type="HOGENOM" id="CLU_3089268_0_0_1"/>
<dbReference type="InParanoid" id="Q11097"/>
<dbReference type="PhylomeDB" id="Q11097"/>
<dbReference type="PRO" id="PR:Q11097"/>
<dbReference type="Proteomes" id="UP000001940">
    <property type="component" value="Chromosome X"/>
</dbReference>
<dbReference type="Bgee" id="WBGene00015325">
    <property type="expression patterns" value="Expressed in material anatomical entity and 1 other cell type or tissue"/>
</dbReference>
<dbReference type="InterPro" id="IPR035291">
    <property type="entry name" value="DUF5354"/>
</dbReference>
<dbReference type="PANTHER" id="PTHR31712">
    <property type="entry name" value="DIETARY RESTRICTION OVER EXPRESSED"/>
    <property type="match status" value="1"/>
</dbReference>
<dbReference type="PANTHER" id="PTHR31712:SF0">
    <property type="entry name" value="DIETARY RESTRICTION OVER EXPRESSED-RELATED"/>
    <property type="match status" value="1"/>
</dbReference>
<dbReference type="Pfam" id="PF17305">
    <property type="entry name" value="DUF5354"/>
    <property type="match status" value="1"/>
</dbReference>
<sequence>MNAVQDAQDQLTKLIRCWEPIDSDDLSKGYTMSDLVYQVSSYVPSPESYSTV</sequence>